<name>RS19_GLAP5</name>
<protein>
    <recommendedName>
        <fullName evidence="1">Small ribosomal subunit protein uS19</fullName>
    </recommendedName>
    <alternativeName>
        <fullName evidence="2">30S ribosomal protein S19</fullName>
    </alternativeName>
</protein>
<dbReference type="EMBL" id="CP001321">
    <property type="protein sequence ID" value="ACL33161.1"/>
    <property type="molecule type" value="Genomic_DNA"/>
</dbReference>
<dbReference type="RefSeq" id="WP_005539416.1">
    <property type="nucleotide sequence ID" value="NC_011852.1"/>
</dbReference>
<dbReference type="SMR" id="B8F759"/>
<dbReference type="STRING" id="557723.HAPS_1610"/>
<dbReference type="GeneID" id="93298793"/>
<dbReference type="KEGG" id="hap:HAPS_1610"/>
<dbReference type="HOGENOM" id="CLU_144911_0_1_6"/>
<dbReference type="Proteomes" id="UP000006743">
    <property type="component" value="Chromosome"/>
</dbReference>
<dbReference type="GO" id="GO:0005737">
    <property type="term" value="C:cytoplasm"/>
    <property type="evidence" value="ECO:0007669"/>
    <property type="project" value="UniProtKB-ARBA"/>
</dbReference>
<dbReference type="GO" id="GO:0015935">
    <property type="term" value="C:small ribosomal subunit"/>
    <property type="evidence" value="ECO:0007669"/>
    <property type="project" value="InterPro"/>
</dbReference>
<dbReference type="GO" id="GO:0019843">
    <property type="term" value="F:rRNA binding"/>
    <property type="evidence" value="ECO:0007669"/>
    <property type="project" value="UniProtKB-UniRule"/>
</dbReference>
<dbReference type="GO" id="GO:0003735">
    <property type="term" value="F:structural constituent of ribosome"/>
    <property type="evidence" value="ECO:0007669"/>
    <property type="project" value="InterPro"/>
</dbReference>
<dbReference type="GO" id="GO:0000028">
    <property type="term" value="P:ribosomal small subunit assembly"/>
    <property type="evidence" value="ECO:0007669"/>
    <property type="project" value="TreeGrafter"/>
</dbReference>
<dbReference type="GO" id="GO:0006412">
    <property type="term" value="P:translation"/>
    <property type="evidence" value="ECO:0007669"/>
    <property type="project" value="UniProtKB-UniRule"/>
</dbReference>
<dbReference type="FunFam" id="3.30.860.10:FF:000001">
    <property type="entry name" value="30S ribosomal protein S19"/>
    <property type="match status" value="1"/>
</dbReference>
<dbReference type="Gene3D" id="3.30.860.10">
    <property type="entry name" value="30s Ribosomal Protein S19, Chain A"/>
    <property type="match status" value="1"/>
</dbReference>
<dbReference type="HAMAP" id="MF_00531">
    <property type="entry name" value="Ribosomal_uS19"/>
    <property type="match status" value="1"/>
</dbReference>
<dbReference type="InterPro" id="IPR002222">
    <property type="entry name" value="Ribosomal_uS19"/>
</dbReference>
<dbReference type="InterPro" id="IPR005732">
    <property type="entry name" value="Ribosomal_uS19_bac-type"/>
</dbReference>
<dbReference type="InterPro" id="IPR020934">
    <property type="entry name" value="Ribosomal_uS19_CS"/>
</dbReference>
<dbReference type="InterPro" id="IPR023575">
    <property type="entry name" value="Ribosomal_uS19_SF"/>
</dbReference>
<dbReference type="NCBIfam" id="TIGR01050">
    <property type="entry name" value="rpsS_bact"/>
    <property type="match status" value="1"/>
</dbReference>
<dbReference type="PANTHER" id="PTHR11880">
    <property type="entry name" value="RIBOSOMAL PROTEIN S19P FAMILY MEMBER"/>
    <property type="match status" value="1"/>
</dbReference>
<dbReference type="PANTHER" id="PTHR11880:SF8">
    <property type="entry name" value="SMALL RIBOSOMAL SUBUNIT PROTEIN US19M"/>
    <property type="match status" value="1"/>
</dbReference>
<dbReference type="Pfam" id="PF00203">
    <property type="entry name" value="Ribosomal_S19"/>
    <property type="match status" value="1"/>
</dbReference>
<dbReference type="PIRSF" id="PIRSF002144">
    <property type="entry name" value="Ribosomal_S19"/>
    <property type="match status" value="1"/>
</dbReference>
<dbReference type="PRINTS" id="PR00975">
    <property type="entry name" value="RIBOSOMALS19"/>
</dbReference>
<dbReference type="SUPFAM" id="SSF54570">
    <property type="entry name" value="Ribosomal protein S19"/>
    <property type="match status" value="1"/>
</dbReference>
<dbReference type="PROSITE" id="PS00323">
    <property type="entry name" value="RIBOSOMAL_S19"/>
    <property type="match status" value="1"/>
</dbReference>
<proteinExistence type="inferred from homology"/>
<organism>
    <name type="scientific">Glaesserella parasuis serovar 5 (strain SH0165)</name>
    <name type="common">Haemophilus parasuis</name>
    <dbReference type="NCBI Taxonomy" id="557723"/>
    <lineage>
        <taxon>Bacteria</taxon>
        <taxon>Pseudomonadati</taxon>
        <taxon>Pseudomonadota</taxon>
        <taxon>Gammaproteobacteria</taxon>
        <taxon>Pasteurellales</taxon>
        <taxon>Pasteurellaceae</taxon>
        <taxon>Glaesserella</taxon>
    </lineage>
</organism>
<reference key="1">
    <citation type="journal article" date="2009" name="J. Bacteriol.">
        <title>Complete genome sequence of Haemophilus parasuis SH0165.</title>
        <authorList>
            <person name="Yue M."/>
            <person name="Yang F."/>
            <person name="Yang J."/>
            <person name="Bei W."/>
            <person name="Cai X."/>
            <person name="Chen L."/>
            <person name="Dong J."/>
            <person name="Zhou R."/>
            <person name="Jin M."/>
            <person name="Jin Q."/>
            <person name="Chen H."/>
        </authorList>
    </citation>
    <scope>NUCLEOTIDE SEQUENCE [LARGE SCALE GENOMIC DNA]</scope>
    <source>
        <strain>SH0165</strain>
    </source>
</reference>
<accession>B8F759</accession>
<keyword id="KW-1185">Reference proteome</keyword>
<keyword id="KW-0687">Ribonucleoprotein</keyword>
<keyword id="KW-0689">Ribosomal protein</keyword>
<keyword id="KW-0694">RNA-binding</keyword>
<keyword id="KW-0699">rRNA-binding</keyword>
<gene>
    <name evidence="1" type="primary">rpsS</name>
    <name type="ordered locus">HAPS_1610</name>
</gene>
<sequence>MPRSLKKGPFLDLHLLKKVEKAVESGDKKPIKTWSRRSMIIPSMIGLTIAVHNGRQHVPVYVSDEMIGHKLGEFAPTRTYRGHAADKKAKK</sequence>
<feature type="chain" id="PRO_1000146393" description="Small ribosomal subunit protein uS19">
    <location>
        <begin position="1"/>
        <end position="91"/>
    </location>
</feature>
<evidence type="ECO:0000255" key="1">
    <source>
        <dbReference type="HAMAP-Rule" id="MF_00531"/>
    </source>
</evidence>
<evidence type="ECO:0000305" key="2"/>
<comment type="function">
    <text evidence="1">Protein S19 forms a complex with S13 that binds strongly to the 16S ribosomal RNA.</text>
</comment>
<comment type="similarity">
    <text evidence="1">Belongs to the universal ribosomal protein uS19 family.</text>
</comment>